<comment type="function">
    <text evidence="2 3">Catalyzes cis-prenyl chain elongation to produce the polyprenyl backbone of dolichol, a glycosyl carrier-lipid required for the biosynthesis of several classes of glycoprotein.</text>
</comment>
<comment type="catalytic activity">
    <reaction evidence="2 3">
        <text>n isopentenyl diphosphate + (2E,6E)-farnesyl diphosphate = a di-trans,poly-cis-polyprenyl diphosphate + n diphosphate</text>
        <dbReference type="Rhea" id="RHEA:53008"/>
        <dbReference type="Rhea" id="RHEA-COMP:19494"/>
        <dbReference type="ChEBI" id="CHEBI:33019"/>
        <dbReference type="ChEBI" id="CHEBI:128769"/>
        <dbReference type="ChEBI" id="CHEBI:136960"/>
        <dbReference type="ChEBI" id="CHEBI:175763"/>
        <dbReference type="EC" id="2.5.1.87"/>
    </reaction>
</comment>
<comment type="cofactor">
    <cofactor>
        <name>Mg(2+)</name>
        <dbReference type="ChEBI" id="CHEBI:18420"/>
    </cofactor>
</comment>
<comment type="biophysicochemical properties">
    <kinetics>
        <KM>0.13 uM for farnesyl diphosphate (FPP)</KM>
        <KM>3.62 uM for geranylgeranyl diphosphate (GGPP)</KM>
        <KM>23 uM for isopentenyl diphosphate (IPP)</KM>
    </kinetics>
</comment>
<comment type="pathway">
    <text>Protein modification; protein glycosylation.</text>
</comment>
<comment type="subcellular location">
    <subcellularLocation>
        <location evidence="2 3">Endoplasmic reticulum membrane</location>
        <topology evidence="2 3">Single-pass membrane protein</topology>
    </subcellularLocation>
</comment>
<comment type="tissue specificity">
    <text evidence="2 3">Expressed in low levels in the whole plant. Preferentially expressed in roots.</text>
</comment>
<comment type="similarity">
    <text evidence="4">Belongs to the UPP synthase family.</text>
</comment>
<accession>O80458</accession>
<accession>Q9SEB8</accession>
<sequence>MLSLLSSDSSLLSLLFLFLIPCLFITSYIGFPVFLLKLIGLIKIKAARDNEKRDEGTYVVREDGLQRELMPRHVAFILDGNRRWAKRAGLTTSQGHEAGAKRLIDIAELCFELGVHTVSAFAFSTENWGRDKIEIDNLMSLIQHYRNKSNIKFFHRSEVRVSVIGNKTKIPESLLKEIHEIEEATKGYKNKHLIMAVDYSGKFDIMHACKSLVKKSEKGLIREEDVDEALIERELLTNCSDFPSPDLMIRTSGEQRISNFFLWQLAYSELFFSPVFWPDFDKDKLLEALASYQRRERRFGCRV</sequence>
<reference key="1">
    <citation type="journal article" date="2000" name="J. Biol. Chem.">
        <title>Molecular cloning, expression, and functional analysis of a cis-prenyltransferase from Arabidopsis thaliana. Implications in rubber biosynthesis.</title>
        <authorList>
            <person name="Oh S.K."/>
            <person name="Han K.H."/>
            <person name="Ryu S.B."/>
            <person name="Kang H."/>
        </authorList>
    </citation>
    <scope>NUCLEOTIDE SEQUENCE [MRNA]</scope>
    <scope>FUNCTION</scope>
    <scope>CATALYTIC ACTIVITY</scope>
    <scope>SUBCELLULAR LOCATION</scope>
    <scope>TISSUE SPECIFICITY</scope>
</reference>
<reference key="2">
    <citation type="journal article" date="2000" name="FEBS Lett.">
        <title>Characterization of dehydrodolichyl diphosphate synthase of Arabidopsis thaliana, a key enzyme in dolichol biosynthesis.</title>
        <authorList>
            <person name="Cunillera N."/>
            <person name="Arro M."/>
            <person name="Fores O."/>
            <person name="Manzano D."/>
            <person name="Ferrer A."/>
        </authorList>
    </citation>
    <scope>NUCLEOTIDE SEQUENCE [MRNA]</scope>
    <scope>FUNCTION</scope>
    <scope>CATALYTIC ACTIVITY</scope>
    <scope>SUBCELLULAR LOCATION</scope>
    <scope>TISSUE SPECIFICITY</scope>
    <source>
        <strain>cv. Columbia</strain>
        <tissue>Seedling</tissue>
    </source>
</reference>
<reference key="3">
    <citation type="journal article" date="1999" name="Nature">
        <title>Sequence and analysis of chromosome 2 of the plant Arabidopsis thaliana.</title>
        <authorList>
            <person name="Lin X."/>
            <person name="Kaul S."/>
            <person name="Rounsley S.D."/>
            <person name="Shea T.P."/>
            <person name="Benito M.-I."/>
            <person name="Town C.D."/>
            <person name="Fujii C.Y."/>
            <person name="Mason T.M."/>
            <person name="Bowman C.L."/>
            <person name="Barnstead M.E."/>
            <person name="Feldblyum T.V."/>
            <person name="Buell C.R."/>
            <person name="Ketchum K.A."/>
            <person name="Lee J.J."/>
            <person name="Ronning C.M."/>
            <person name="Koo H.L."/>
            <person name="Moffat K.S."/>
            <person name="Cronin L.A."/>
            <person name="Shen M."/>
            <person name="Pai G."/>
            <person name="Van Aken S."/>
            <person name="Umayam L."/>
            <person name="Tallon L.J."/>
            <person name="Gill J.E."/>
            <person name="Adams M.D."/>
            <person name="Carrera A.J."/>
            <person name="Creasy T.H."/>
            <person name="Goodman H.M."/>
            <person name="Somerville C.R."/>
            <person name="Copenhaver G.P."/>
            <person name="Preuss D."/>
            <person name="Nierman W.C."/>
            <person name="White O."/>
            <person name="Eisen J.A."/>
            <person name="Salzberg S.L."/>
            <person name="Fraser C.M."/>
            <person name="Venter J.C."/>
        </authorList>
    </citation>
    <scope>NUCLEOTIDE SEQUENCE [LARGE SCALE GENOMIC DNA]</scope>
    <source>
        <strain>cv. Columbia</strain>
    </source>
</reference>
<reference key="4">
    <citation type="journal article" date="2017" name="Plant J.">
        <title>Araport11: a complete reannotation of the Arabidopsis thaliana reference genome.</title>
        <authorList>
            <person name="Cheng C.Y."/>
            <person name="Krishnakumar V."/>
            <person name="Chan A.P."/>
            <person name="Thibaud-Nissen F."/>
            <person name="Schobel S."/>
            <person name="Town C.D."/>
        </authorList>
    </citation>
    <scope>GENOME REANNOTATION</scope>
    <source>
        <strain>cv. Columbia</strain>
    </source>
</reference>
<evidence type="ECO:0000255" key="1"/>
<evidence type="ECO:0000269" key="2">
    <source>
    </source>
</evidence>
<evidence type="ECO:0000269" key="3">
    <source>
    </source>
</evidence>
<evidence type="ECO:0000305" key="4"/>
<name>DDPS1_ARATH</name>
<gene>
    <name type="primary">DPS</name>
    <name type="synonym">ACPT</name>
    <name type="ordered locus">At2g23410</name>
    <name type="ORF">F26B6.6</name>
</gene>
<protein>
    <recommendedName>
        <fullName>Dehydrodolichyl diphosphate synthase 1</fullName>
        <shortName>Dedol-PP synthase 1</shortName>
        <ecNumber>2.5.1.87</ecNumber>
    </recommendedName>
    <alternativeName>
        <fullName>Ditrans,polycis-polyprenyl diphosphate synthase ((2E,6E)-farnesyl diphosphate specific) 1</fullName>
    </alternativeName>
</protein>
<proteinExistence type="evidence at protein level"/>
<organism>
    <name type="scientific">Arabidopsis thaliana</name>
    <name type="common">Mouse-ear cress</name>
    <dbReference type="NCBI Taxonomy" id="3702"/>
    <lineage>
        <taxon>Eukaryota</taxon>
        <taxon>Viridiplantae</taxon>
        <taxon>Streptophyta</taxon>
        <taxon>Embryophyta</taxon>
        <taxon>Tracheophyta</taxon>
        <taxon>Spermatophyta</taxon>
        <taxon>Magnoliopsida</taxon>
        <taxon>eudicotyledons</taxon>
        <taxon>Gunneridae</taxon>
        <taxon>Pentapetalae</taxon>
        <taxon>rosids</taxon>
        <taxon>malvids</taxon>
        <taxon>Brassicales</taxon>
        <taxon>Brassicaceae</taxon>
        <taxon>Camelineae</taxon>
        <taxon>Arabidopsis</taxon>
    </lineage>
</organism>
<feature type="chain" id="PRO_0000123751" description="Dehydrodolichyl diphosphate synthase 1">
    <location>
        <begin position="1"/>
        <end position="303"/>
    </location>
</feature>
<feature type="transmembrane region" description="Helical" evidence="1">
    <location>
        <begin position="14"/>
        <end position="34"/>
    </location>
</feature>
<dbReference type="EC" id="2.5.1.87"/>
<dbReference type="EMBL" id="AF162441">
    <property type="protein sequence ID" value="AAF22257.1"/>
    <property type="molecule type" value="mRNA"/>
</dbReference>
<dbReference type="EMBL" id="AJ277136">
    <property type="protein sequence ID" value="CAB91841.1"/>
    <property type="molecule type" value="mRNA"/>
</dbReference>
<dbReference type="EMBL" id="AC003040">
    <property type="protein sequence ID" value="AAC23756.2"/>
    <property type="molecule type" value="Genomic_DNA"/>
</dbReference>
<dbReference type="EMBL" id="CP002685">
    <property type="protein sequence ID" value="AEC07452.1"/>
    <property type="molecule type" value="Genomic_DNA"/>
</dbReference>
<dbReference type="PIR" id="T01130">
    <property type="entry name" value="T01130"/>
</dbReference>
<dbReference type="PIR" id="T52648">
    <property type="entry name" value="T52648"/>
</dbReference>
<dbReference type="RefSeq" id="NP_565551.1">
    <property type="nucleotide sequence ID" value="NM_127905.4"/>
</dbReference>
<dbReference type="SMR" id="O80458"/>
<dbReference type="FunCoup" id="O80458">
    <property type="interactions" value="11"/>
</dbReference>
<dbReference type="STRING" id="3702.O80458"/>
<dbReference type="PaxDb" id="3702-AT2G23410.1"/>
<dbReference type="ProteomicsDB" id="224609"/>
<dbReference type="EnsemblPlants" id="AT2G23410.1">
    <property type="protein sequence ID" value="AT2G23410.1"/>
    <property type="gene ID" value="AT2G23410"/>
</dbReference>
<dbReference type="GeneID" id="816873"/>
<dbReference type="Gramene" id="AT2G23410.1">
    <property type="protein sequence ID" value="AT2G23410.1"/>
    <property type="gene ID" value="AT2G23410"/>
</dbReference>
<dbReference type="KEGG" id="ath:AT2G23410"/>
<dbReference type="Araport" id="AT2G23410"/>
<dbReference type="TAIR" id="AT2G23410">
    <property type="gene designation" value="CPT"/>
</dbReference>
<dbReference type="eggNOG" id="KOG1602">
    <property type="taxonomic scope" value="Eukaryota"/>
</dbReference>
<dbReference type="HOGENOM" id="CLU_038505_1_0_1"/>
<dbReference type="InParanoid" id="O80458"/>
<dbReference type="OMA" id="TKGQPDP"/>
<dbReference type="PhylomeDB" id="O80458"/>
<dbReference type="BioCyc" id="ARA:AT2G23410-MONOMER"/>
<dbReference type="BRENDA" id="2.5.1.87">
    <property type="organism ID" value="399"/>
</dbReference>
<dbReference type="UniPathway" id="UPA00378"/>
<dbReference type="PRO" id="PR:O80458"/>
<dbReference type="Proteomes" id="UP000006548">
    <property type="component" value="Chromosome 2"/>
</dbReference>
<dbReference type="ExpressionAtlas" id="O80458">
    <property type="expression patterns" value="baseline and differential"/>
</dbReference>
<dbReference type="GO" id="GO:0005783">
    <property type="term" value="C:endoplasmic reticulum"/>
    <property type="evidence" value="ECO:0000314"/>
    <property type="project" value="TAIR"/>
</dbReference>
<dbReference type="GO" id="GO:0005789">
    <property type="term" value="C:endoplasmic reticulum membrane"/>
    <property type="evidence" value="ECO:0007669"/>
    <property type="project" value="UniProtKB-SubCell"/>
</dbReference>
<dbReference type="GO" id="GO:0045547">
    <property type="term" value="F:ditrans,polycis-polyprenyl diphosphate synthase [(2E,6E)-farnesyl diphosphate specific] activity"/>
    <property type="evidence" value="ECO:0000316"/>
    <property type="project" value="TAIR"/>
</dbReference>
<dbReference type="GO" id="GO:0019408">
    <property type="term" value="P:dolichol biosynthetic process"/>
    <property type="evidence" value="ECO:0000315"/>
    <property type="project" value="TAIR"/>
</dbReference>
<dbReference type="GO" id="GO:0006486">
    <property type="term" value="P:protein glycosylation"/>
    <property type="evidence" value="ECO:0007669"/>
    <property type="project" value="UniProtKB-UniPathway"/>
</dbReference>
<dbReference type="CDD" id="cd00475">
    <property type="entry name" value="Cis_IPPS"/>
    <property type="match status" value="1"/>
</dbReference>
<dbReference type="FunFam" id="3.40.1180.10:FF:000001">
    <property type="entry name" value="(2E,6E)-farnesyl-diphosphate-specific ditrans,polycis-undecaprenyl-diphosphate synthase"/>
    <property type="match status" value="1"/>
</dbReference>
<dbReference type="Gene3D" id="3.40.1180.10">
    <property type="entry name" value="Decaprenyl diphosphate synthase-like"/>
    <property type="match status" value="1"/>
</dbReference>
<dbReference type="HAMAP" id="MF_01139">
    <property type="entry name" value="ISPT"/>
    <property type="match status" value="1"/>
</dbReference>
<dbReference type="InterPro" id="IPR001441">
    <property type="entry name" value="UPP_synth-like"/>
</dbReference>
<dbReference type="InterPro" id="IPR018520">
    <property type="entry name" value="UPP_synth-like_CS"/>
</dbReference>
<dbReference type="InterPro" id="IPR036424">
    <property type="entry name" value="UPP_synth-like_sf"/>
</dbReference>
<dbReference type="NCBIfam" id="TIGR00055">
    <property type="entry name" value="uppS"/>
    <property type="match status" value="1"/>
</dbReference>
<dbReference type="PANTHER" id="PTHR10291:SF25">
    <property type="entry name" value="ALKYL TRANSFERASE-RELATED"/>
    <property type="match status" value="1"/>
</dbReference>
<dbReference type="PANTHER" id="PTHR10291">
    <property type="entry name" value="DEHYDRODOLICHYL DIPHOSPHATE SYNTHASE FAMILY MEMBER"/>
    <property type="match status" value="1"/>
</dbReference>
<dbReference type="Pfam" id="PF01255">
    <property type="entry name" value="Prenyltransf"/>
    <property type="match status" value="1"/>
</dbReference>
<dbReference type="SUPFAM" id="SSF64005">
    <property type="entry name" value="Undecaprenyl diphosphate synthase"/>
    <property type="match status" value="1"/>
</dbReference>
<dbReference type="PROSITE" id="PS01066">
    <property type="entry name" value="UPP_SYNTHASE"/>
    <property type="match status" value="1"/>
</dbReference>
<keyword id="KW-0256">Endoplasmic reticulum</keyword>
<keyword id="KW-0472">Membrane</keyword>
<keyword id="KW-1185">Reference proteome</keyword>
<keyword id="KW-0808">Transferase</keyword>
<keyword id="KW-0812">Transmembrane</keyword>
<keyword id="KW-1133">Transmembrane helix</keyword>